<accession>B1ITJ5</accession>
<feature type="chain" id="PRO_1000076354" description="Tryptophan synthase alpha chain">
    <location>
        <begin position="1"/>
        <end position="268"/>
    </location>
</feature>
<feature type="active site" description="Proton acceptor" evidence="1">
    <location>
        <position position="49"/>
    </location>
</feature>
<feature type="active site" description="Proton acceptor" evidence="1">
    <location>
        <position position="60"/>
    </location>
</feature>
<gene>
    <name evidence="1" type="primary">trpA</name>
    <name type="ordered locus">EcolC_2367</name>
</gene>
<name>TRPA_ECOLC</name>
<proteinExistence type="inferred from homology"/>
<protein>
    <recommendedName>
        <fullName evidence="1">Tryptophan synthase alpha chain</fullName>
        <ecNumber evidence="1">4.2.1.20</ecNumber>
    </recommendedName>
</protein>
<keyword id="KW-0028">Amino-acid biosynthesis</keyword>
<keyword id="KW-0057">Aromatic amino acid biosynthesis</keyword>
<keyword id="KW-0456">Lyase</keyword>
<keyword id="KW-0822">Tryptophan biosynthesis</keyword>
<sequence>MERYESLFAQLKERKEGAFVPFVTLGDPGIEQSLKIIDTLIEAGADALELGIPFSDPLADGPTIQNATLRAFAAGVTPAQCFEMLALIRQKHPTIPIGLLMYANLVFNKGIDEFYAQCEKVGVDSVLVADVPVEESAPFRQAALRHNVAPIFICPPNADDDLLRQIASYGRGYTYLLSRAGVTGAENRAALPLNHLVAKLKEYNAAPPLQGFGISAPDQVKAAIDAGAAGAISGSAIVKIIEQHINEPEKMLAALKVFVQPMKAATRS</sequence>
<reference key="1">
    <citation type="submission" date="2008-02" db="EMBL/GenBank/DDBJ databases">
        <title>Complete sequence of Escherichia coli C str. ATCC 8739.</title>
        <authorList>
            <person name="Copeland A."/>
            <person name="Lucas S."/>
            <person name="Lapidus A."/>
            <person name="Glavina del Rio T."/>
            <person name="Dalin E."/>
            <person name="Tice H."/>
            <person name="Bruce D."/>
            <person name="Goodwin L."/>
            <person name="Pitluck S."/>
            <person name="Kiss H."/>
            <person name="Brettin T."/>
            <person name="Detter J.C."/>
            <person name="Han C."/>
            <person name="Kuske C.R."/>
            <person name="Schmutz J."/>
            <person name="Larimer F."/>
            <person name="Land M."/>
            <person name="Hauser L."/>
            <person name="Kyrpides N."/>
            <person name="Mikhailova N."/>
            <person name="Ingram L."/>
            <person name="Richardson P."/>
        </authorList>
    </citation>
    <scope>NUCLEOTIDE SEQUENCE [LARGE SCALE GENOMIC DNA]</scope>
    <source>
        <strain>ATCC 8739 / DSM 1576 / NBRC 3972 / NCIMB 8545 / WDCM 00012 / Crooks</strain>
    </source>
</reference>
<organism>
    <name type="scientific">Escherichia coli (strain ATCC 8739 / DSM 1576 / NBRC 3972 / NCIMB 8545 / WDCM 00012 / Crooks)</name>
    <dbReference type="NCBI Taxonomy" id="481805"/>
    <lineage>
        <taxon>Bacteria</taxon>
        <taxon>Pseudomonadati</taxon>
        <taxon>Pseudomonadota</taxon>
        <taxon>Gammaproteobacteria</taxon>
        <taxon>Enterobacterales</taxon>
        <taxon>Enterobacteriaceae</taxon>
        <taxon>Escherichia</taxon>
    </lineage>
</organism>
<evidence type="ECO:0000255" key="1">
    <source>
        <dbReference type="HAMAP-Rule" id="MF_00131"/>
    </source>
</evidence>
<comment type="function">
    <text evidence="1">The alpha subunit is responsible for the aldol cleavage of indoleglycerol phosphate to indole and glyceraldehyde 3-phosphate.</text>
</comment>
<comment type="catalytic activity">
    <reaction evidence="1">
        <text>(1S,2R)-1-C-(indol-3-yl)glycerol 3-phosphate + L-serine = D-glyceraldehyde 3-phosphate + L-tryptophan + H2O</text>
        <dbReference type="Rhea" id="RHEA:10532"/>
        <dbReference type="ChEBI" id="CHEBI:15377"/>
        <dbReference type="ChEBI" id="CHEBI:33384"/>
        <dbReference type="ChEBI" id="CHEBI:57912"/>
        <dbReference type="ChEBI" id="CHEBI:58866"/>
        <dbReference type="ChEBI" id="CHEBI:59776"/>
        <dbReference type="EC" id="4.2.1.20"/>
    </reaction>
</comment>
<comment type="pathway">
    <text evidence="1">Amino-acid biosynthesis; L-tryptophan biosynthesis; L-tryptophan from chorismate: step 5/5.</text>
</comment>
<comment type="subunit">
    <text evidence="1">Tetramer of two alpha and two beta chains.</text>
</comment>
<comment type="similarity">
    <text evidence="1">Belongs to the TrpA family.</text>
</comment>
<dbReference type="EC" id="4.2.1.20" evidence="1"/>
<dbReference type="EMBL" id="CP000946">
    <property type="protein sequence ID" value="ACA78002.1"/>
    <property type="molecule type" value="Genomic_DNA"/>
</dbReference>
<dbReference type="RefSeq" id="WP_000443067.1">
    <property type="nucleotide sequence ID" value="NZ_MTFT01000016.1"/>
</dbReference>
<dbReference type="SMR" id="B1ITJ5"/>
<dbReference type="GeneID" id="75171374"/>
<dbReference type="KEGG" id="ecl:EcolC_2367"/>
<dbReference type="HOGENOM" id="CLU_016734_0_4_6"/>
<dbReference type="UniPathway" id="UPA00035">
    <property type="reaction ID" value="UER00044"/>
</dbReference>
<dbReference type="GO" id="GO:0005829">
    <property type="term" value="C:cytosol"/>
    <property type="evidence" value="ECO:0007669"/>
    <property type="project" value="TreeGrafter"/>
</dbReference>
<dbReference type="GO" id="GO:0004834">
    <property type="term" value="F:tryptophan synthase activity"/>
    <property type="evidence" value="ECO:0007669"/>
    <property type="project" value="UniProtKB-UniRule"/>
</dbReference>
<dbReference type="CDD" id="cd04724">
    <property type="entry name" value="Tryptophan_synthase_alpha"/>
    <property type="match status" value="1"/>
</dbReference>
<dbReference type="FunFam" id="3.20.20.70:FF:000037">
    <property type="entry name" value="Tryptophan synthase alpha chain"/>
    <property type="match status" value="1"/>
</dbReference>
<dbReference type="Gene3D" id="3.20.20.70">
    <property type="entry name" value="Aldolase class I"/>
    <property type="match status" value="1"/>
</dbReference>
<dbReference type="HAMAP" id="MF_00131">
    <property type="entry name" value="Trp_synth_alpha"/>
    <property type="match status" value="1"/>
</dbReference>
<dbReference type="InterPro" id="IPR013785">
    <property type="entry name" value="Aldolase_TIM"/>
</dbReference>
<dbReference type="InterPro" id="IPR011060">
    <property type="entry name" value="RibuloseP-bd_barrel"/>
</dbReference>
<dbReference type="InterPro" id="IPR018204">
    <property type="entry name" value="Trp_synthase_alpha_AS"/>
</dbReference>
<dbReference type="InterPro" id="IPR002028">
    <property type="entry name" value="Trp_synthase_suA"/>
</dbReference>
<dbReference type="NCBIfam" id="TIGR00262">
    <property type="entry name" value="trpA"/>
    <property type="match status" value="1"/>
</dbReference>
<dbReference type="PANTHER" id="PTHR43406:SF1">
    <property type="entry name" value="TRYPTOPHAN SYNTHASE ALPHA CHAIN, CHLOROPLASTIC"/>
    <property type="match status" value="1"/>
</dbReference>
<dbReference type="PANTHER" id="PTHR43406">
    <property type="entry name" value="TRYPTOPHAN SYNTHASE, ALPHA CHAIN"/>
    <property type="match status" value="1"/>
</dbReference>
<dbReference type="Pfam" id="PF00290">
    <property type="entry name" value="Trp_syntA"/>
    <property type="match status" value="1"/>
</dbReference>
<dbReference type="SUPFAM" id="SSF51366">
    <property type="entry name" value="Ribulose-phoshate binding barrel"/>
    <property type="match status" value="1"/>
</dbReference>
<dbReference type="PROSITE" id="PS00167">
    <property type="entry name" value="TRP_SYNTHASE_ALPHA"/>
    <property type="match status" value="1"/>
</dbReference>